<protein>
    <recommendedName>
        <fullName>Probable G-protein coupled receptor 34</fullName>
    </recommendedName>
</protein>
<reference key="1">
    <citation type="journal article" date="2006" name="Genomics">
        <title>Genomic and supragenomic structure of the nucleotide-like G-protein-coupled receptor GPR34.</title>
        <authorList>
            <person name="Engemaier E."/>
            <person name="Rompler H."/>
            <person name="Schoneberg T."/>
            <person name="Schulz A."/>
        </authorList>
    </citation>
    <scope>NUCLEOTIDE SEQUENCE [MRNA]</scope>
</reference>
<feature type="chain" id="PRO_0000069561" description="Probable G-protein coupled receptor 34">
    <location>
        <begin position="1"/>
        <end position="381"/>
    </location>
</feature>
<feature type="topological domain" description="Extracellular" evidence="3">
    <location>
        <begin position="1"/>
        <end position="61"/>
    </location>
</feature>
<feature type="transmembrane region" description="Helical; Name=1" evidence="3">
    <location>
        <begin position="62"/>
        <end position="82"/>
    </location>
</feature>
<feature type="topological domain" description="Cytoplasmic" evidence="3">
    <location>
        <begin position="83"/>
        <end position="88"/>
    </location>
</feature>
<feature type="transmembrane region" description="Helical; Name=2" evidence="3">
    <location>
        <begin position="89"/>
        <end position="109"/>
    </location>
</feature>
<feature type="topological domain" description="Extracellular" evidence="3">
    <location>
        <begin position="110"/>
        <end position="128"/>
    </location>
</feature>
<feature type="transmembrane region" description="Helical; Name=3" evidence="3">
    <location>
        <begin position="129"/>
        <end position="149"/>
    </location>
</feature>
<feature type="topological domain" description="Cytoplasmic" evidence="3">
    <location>
        <begin position="150"/>
        <end position="171"/>
    </location>
</feature>
<feature type="transmembrane region" description="Helical; Name=4" evidence="3">
    <location>
        <begin position="172"/>
        <end position="192"/>
    </location>
</feature>
<feature type="topological domain" description="Extracellular" evidence="3">
    <location>
        <begin position="193"/>
        <end position="216"/>
    </location>
</feature>
<feature type="transmembrane region" description="Helical; Name=5" evidence="3">
    <location>
        <begin position="217"/>
        <end position="237"/>
    </location>
</feature>
<feature type="topological domain" description="Cytoplasmic" evidence="3">
    <location>
        <begin position="238"/>
        <end position="269"/>
    </location>
</feature>
<feature type="transmembrane region" description="Helical; Name=6" evidence="3">
    <location>
        <begin position="270"/>
        <end position="290"/>
    </location>
</feature>
<feature type="topological domain" description="Extracellular" evidence="3">
    <location>
        <begin position="291"/>
        <end position="310"/>
    </location>
</feature>
<feature type="transmembrane region" description="Helical; Name=7" evidence="3">
    <location>
        <begin position="311"/>
        <end position="331"/>
    </location>
</feature>
<feature type="topological domain" description="Cytoplasmic" evidence="3">
    <location>
        <begin position="332"/>
        <end position="381"/>
    </location>
</feature>
<feature type="glycosylation site" description="N-linked (GlcNAc...) asparagine" evidence="3">
    <location>
        <position position="28"/>
    </location>
</feature>
<feature type="glycosylation site" description="N-linked (GlcNAc...) asparagine" evidence="3">
    <location>
        <position position="36"/>
    </location>
</feature>
<feature type="glycosylation site" description="N-linked (GlcNAc...) asparagine" evidence="3">
    <location>
        <position position="42"/>
    </location>
</feature>
<feature type="glycosylation site" description="N-linked (GlcNAc...) asparagine" evidence="3">
    <location>
        <position position="200"/>
    </location>
</feature>
<feature type="glycosylation site" description="N-linked (GlcNAc...) asparagine" evidence="3">
    <location>
        <position position="295"/>
    </location>
</feature>
<feature type="disulfide bond" evidence="4">
    <location>
        <begin position="127"/>
        <end position="204"/>
    </location>
</feature>
<dbReference type="EMBL" id="DQ106403">
    <property type="protein sequence ID" value="AAZ99232.1"/>
    <property type="molecule type" value="mRNA"/>
</dbReference>
<dbReference type="RefSeq" id="NP_001266129.1">
    <property type="nucleotide sequence ID" value="NM_001279200.1"/>
</dbReference>
<dbReference type="RefSeq" id="XP_008966565.1">
    <property type="nucleotide sequence ID" value="XM_008968317.4"/>
</dbReference>
<dbReference type="RefSeq" id="XP_008966567.1">
    <property type="nucleotide sequence ID" value="XM_008968319.5"/>
</dbReference>
<dbReference type="RefSeq" id="XP_008966568.1">
    <property type="nucleotide sequence ID" value="XM_008968320.5"/>
</dbReference>
<dbReference type="RefSeq" id="XP_008966569.1">
    <property type="nucleotide sequence ID" value="XM_008968321.1"/>
</dbReference>
<dbReference type="RefSeq" id="XP_034805254.1">
    <property type="nucleotide sequence ID" value="XM_034949363.3"/>
</dbReference>
<dbReference type="RefSeq" id="XP_034805255.1">
    <property type="nucleotide sequence ID" value="XM_034949364.3"/>
</dbReference>
<dbReference type="RefSeq" id="XP_034805256.1">
    <property type="nucleotide sequence ID" value="XM_034949365.3"/>
</dbReference>
<dbReference type="RefSeq" id="XP_057157025.1">
    <property type="nucleotide sequence ID" value="XM_057301042.2"/>
</dbReference>
<dbReference type="SMR" id="Q3SAG9"/>
<dbReference type="GlyCosmos" id="Q3SAG9">
    <property type="glycosylation" value="5 sites, No reported glycans"/>
</dbReference>
<dbReference type="GeneID" id="100967768"/>
<dbReference type="KEGG" id="pps:100967768"/>
<dbReference type="CTD" id="2857"/>
<dbReference type="eggNOG" id="ENOG502QT81">
    <property type="taxonomic scope" value="Eukaryota"/>
</dbReference>
<dbReference type="Proteomes" id="UP000240080">
    <property type="component" value="Unplaced"/>
</dbReference>
<dbReference type="GO" id="GO:0005886">
    <property type="term" value="C:plasma membrane"/>
    <property type="evidence" value="ECO:0007669"/>
    <property type="project" value="UniProtKB-SubCell"/>
</dbReference>
<dbReference type="GO" id="GO:0045028">
    <property type="term" value="F:G protein-coupled purinergic nucleotide receptor activity"/>
    <property type="evidence" value="ECO:0007669"/>
    <property type="project" value="TreeGrafter"/>
</dbReference>
<dbReference type="CDD" id="cd15148">
    <property type="entry name" value="7tmA_GPR34-like"/>
    <property type="match status" value="1"/>
</dbReference>
<dbReference type="FunFam" id="1.20.1070.10:FF:000150">
    <property type="entry name" value="probable G-protein coupled receptor 34"/>
    <property type="match status" value="1"/>
</dbReference>
<dbReference type="Gene3D" id="1.20.1070.10">
    <property type="entry name" value="Rhodopsin 7-helix transmembrane proteins"/>
    <property type="match status" value="1"/>
</dbReference>
<dbReference type="InterPro" id="IPR000276">
    <property type="entry name" value="GPCR_Rhodpsn"/>
</dbReference>
<dbReference type="InterPro" id="IPR017452">
    <property type="entry name" value="GPCR_Rhodpsn_7TM"/>
</dbReference>
<dbReference type="InterPro" id="IPR048057">
    <property type="entry name" value="GPR34_7tmA"/>
</dbReference>
<dbReference type="PANTHER" id="PTHR24233:SF1">
    <property type="entry name" value="G-PROTEIN COUPLED RECEPTOR 34-RELATED"/>
    <property type="match status" value="1"/>
</dbReference>
<dbReference type="PANTHER" id="PTHR24233">
    <property type="entry name" value="P2Y PURINOCEPTOR-RELATED G-PROTEIN COUPLED RECEPTOR"/>
    <property type="match status" value="1"/>
</dbReference>
<dbReference type="Pfam" id="PF00001">
    <property type="entry name" value="7tm_1"/>
    <property type="match status" value="1"/>
</dbReference>
<dbReference type="PRINTS" id="PR00237">
    <property type="entry name" value="GPCRRHODOPSN"/>
</dbReference>
<dbReference type="PRINTS" id="PR01157">
    <property type="entry name" value="P2YPURNOCPTR"/>
</dbReference>
<dbReference type="SUPFAM" id="SSF81321">
    <property type="entry name" value="Family A G protein-coupled receptor-like"/>
    <property type="match status" value="1"/>
</dbReference>
<dbReference type="PROSITE" id="PS00237">
    <property type="entry name" value="G_PROTEIN_RECEP_F1_1"/>
    <property type="match status" value="1"/>
</dbReference>
<dbReference type="PROSITE" id="PS50262">
    <property type="entry name" value="G_PROTEIN_RECEP_F1_2"/>
    <property type="match status" value="1"/>
</dbReference>
<name>GPR34_PANPA</name>
<accession>Q3SAG9</accession>
<proteinExistence type="evidence at transcript level"/>
<evidence type="ECO:0000250" key="1">
    <source>
        <dbReference type="UniProtKB" id="Q9R1K6"/>
    </source>
</evidence>
<evidence type="ECO:0000250" key="2">
    <source>
        <dbReference type="UniProtKB" id="Q9UPC5"/>
    </source>
</evidence>
<evidence type="ECO:0000255" key="3"/>
<evidence type="ECO:0000255" key="4">
    <source>
        <dbReference type="PROSITE-ProRule" id="PRU00521"/>
    </source>
</evidence>
<keyword id="KW-1003">Cell membrane</keyword>
<keyword id="KW-1015">Disulfide bond</keyword>
<keyword id="KW-0297">G-protein coupled receptor</keyword>
<keyword id="KW-0325">Glycoprotein</keyword>
<keyword id="KW-0472">Membrane</keyword>
<keyword id="KW-0675">Receptor</keyword>
<keyword id="KW-1185">Reference proteome</keyword>
<keyword id="KW-0807">Transducer</keyword>
<keyword id="KW-0812">Transmembrane</keyword>
<keyword id="KW-1133">Transmembrane helix</keyword>
<comment type="function">
    <text evidence="1 2">G-protein-coupled receptor of lysophosphatidylserine (LysoPS) that plays different roles in immune response (By similarity). Acts a damage-sensing receptor that triggers tissue repair upon recognition of dying neutrophils (By similarity). Mechanistically, apoptotic neutrophils release lysophosphatydilserine that are recognized by type 3 innate lymphoid cells (ILC3s) via GPR34, which activates downstream PI3K-AKT and RAS-ERK signaling pathways leading to STAT3 activation and IL-22 production (By similarity). Plays an important role in microglial function, controlling morphology and phagocytosis (By similarity).</text>
</comment>
<comment type="subcellular location">
    <subcellularLocation>
        <location evidence="2">Cell membrane</location>
        <topology evidence="2">Multi-pass membrane protein</topology>
    </subcellularLocation>
</comment>
<comment type="similarity">
    <text evidence="4">Belongs to the G-protein coupled receptor 1 family.</text>
</comment>
<organism>
    <name type="scientific">Pan paniscus</name>
    <name type="common">Pygmy chimpanzee</name>
    <name type="synonym">Bonobo</name>
    <dbReference type="NCBI Taxonomy" id="9597"/>
    <lineage>
        <taxon>Eukaryota</taxon>
        <taxon>Metazoa</taxon>
        <taxon>Chordata</taxon>
        <taxon>Craniata</taxon>
        <taxon>Vertebrata</taxon>
        <taxon>Euteleostomi</taxon>
        <taxon>Mammalia</taxon>
        <taxon>Eutheria</taxon>
        <taxon>Euarchontoglires</taxon>
        <taxon>Primates</taxon>
        <taxon>Haplorrhini</taxon>
        <taxon>Catarrhini</taxon>
        <taxon>Hominidae</taxon>
        <taxon>Pan</taxon>
    </lineage>
</organism>
<sequence>MRSHTITMTTTSVSSWPYSSHRMRFITNHSDQPPQNFSATPNVTTCPMDEKLLSTVLTTSYSVIFIVGLVGNIIALYVFLGIHRKRNSIQIYLLNVAIADLLLIFCLPFRIMYHINQNKWTLGVILCKVVGTLFYMNMYISIILLGFISLDRYIKINRSIQQRKAITTKQSIYVCCIVWMLALGGFLTMIILTLKKGGHNSTMCFHYRDKHNAKGEAIFNFILVVMFWLIFLLIILSYIKIGKNLLRISKRRSKFPNSGKYATTARNSFIVLIIFTICFVPYHAFRFIYISSQLNVSSCYWKEIVHKTNEIMLVLSSFNSCLDPVMYFLMSSNIRKIMCQLLFRRFQGEPSRSESTSEFKPGYSLHDTSVAVKIQSSSKST</sequence>
<gene>
    <name type="primary">GPR34</name>
</gene>